<dbReference type="GO" id="GO:0005576">
    <property type="term" value="C:extracellular region"/>
    <property type="evidence" value="ECO:0007669"/>
    <property type="project" value="UniProtKB-SubCell"/>
</dbReference>
<dbReference type="GO" id="GO:0030414">
    <property type="term" value="F:peptidase inhibitor activity"/>
    <property type="evidence" value="ECO:0007669"/>
    <property type="project" value="UniProtKB-KW"/>
</dbReference>
<dbReference type="GO" id="GO:0090729">
    <property type="term" value="F:toxin activity"/>
    <property type="evidence" value="ECO:0007669"/>
    <property type="project" value="UniProtKB-KW"/>
</dbReference>
<dbReference type="GO" id="GO:0008217">
    <property type="term" value="P:regulation of blood pressure"/>
    <property type="evidence" value="ECO:0007669"/>
    <property type="project" value="UniProtKB-KW"/>
</dbReference>
<evidence type="ECO:0000250" key="1"/>
<evidence type="ECO:0000269" key="2">
    <source>
    </source>
</evidence>
<evidence type="ECO:0000305" key="3"/>
<feature type="peptide" id="PRO_0000421901" description="Bradykinin-potentiating peptide 7b">
    <location>
        <begin position="1"/>
        <end position="7"/>
    </location>
</feature>
<feature type="modified residue" description="Pyrrolidone carboxylic acid" evidence="2">
    <location>
        <position position="1"/>
    </location>
</feature>
<feature type="unsure residue" description="K or Q">
    <location>
        <position position="7"/>
    </location>
</feature>
<keyword id="KW-0903">Direct protein sequencing</keyword>
<keyword id="KW-0382">Hypotensive agent</keyword>
<keyword id="KW-0481">Metalloenzyme inhibitor</keyword>
<keyword id="KW-0483">Metalloprotease inhibitor</keyword>
<keyword id="KW-0646">Protease inhibitor</keyword>
<keyword id="KW-0873">Pyrrolidone carboxylic acid</keyword>
<keyword id="KW-0964">Secreted</keyword>
<keyword id="KW-0800">Toxin</keyword>
<name>BPP7B_BOTCO</name>
<accession>P0DKZ3</accession>
<proteinExistence type="evidence at protein level"/>
<sequence length="7" mass="856">QNWPSPK</sequence>
<comment type="function">
    <text evidence="1 2">This peptide both inhibits the activity of the angiotensin-converting enzyme (ACE) and enhances the action of bradykinin by inhibiting the peptidases that inactivate it. It acts as an indirect hypotensive agent (By similarity).</text>
</comment>
<comment type="subcellular location">
    <subcellularLocation>
        <location>Secreted</location>
    </subcellularLocation>
</comment>
<comment type="tissue specificity">
    <text>Expressed by the venom gland.</text>
</comment>
<comment type="mass spectrometry" mass="838.4" method="Electrospray" evidence="2"/>
<comment type="similarity">
    <text evidence="3">Belongs to the bradykinin-potentiating peptide family.</text>
</comment>
<organism>
    <name type="scientific">Bothrops cotiara</name>
    <name type="common">Cotiara</name>
    <name type="synonym">Rhinocerophis cotiara</name>
    <dbReference type="NCBI Taxonomy" id="8727"/>
    <lineage>
        <taxon>Eukaryota</taxon>
        <taxon>Metazoa</taxon>
        <taxon>Chordata</taxon>
        <taxon>Craniata</taxon>
        <taxon>Vertebrata</taxon>
        <taxon>Euteleostomi</taxon>
        <taxon>Lepidosauria</taxon>
        <taxon>Squamata</taxon>
        <taxon>Bifurcata</taxon>
        <taxon>Unidentata</taxon>
        <taxon>Episquamata</taxon>
        <taxon>Toxicofera</taxon>
        <taxon>Serpentes</taxon>
        <taxon>Colubroidea</taxon>
        <taxon>Viperidae</taxon>
        <taxon>Crotalinae</taxon>
        <taxon>Bothrops</taxon>
    </lineage>
</organism>
<reference key="1">
    <citation type="journal article" date="2012" name="Mol. Cell. Proteomics">
        <title>Peptidomics of three Bothrops snake venoms: insights into the molecular diversification of proteomes and peptidomes.</title>
        <authorList>
            <person name="Tashima A.K."/>
            <person name="Zelanis A."/>
            <person name="Kitano E.S."/>
            <person name="Ianzer D."/>
            <person name="Melo R.L."/>
            <person name="Rioli V."/>
            <person name="Sant'anna S.S."/>
            <person name="Schenberg A.C."/>
            <person name="Camargo A.C."/>
            <person name="Serrano S.M.T."/>
        </authorList>
    </citation>
    <scope>PROTEIN SEQUENCE</scope>
    <scope>FUNCTION</scope>
    <scope>PYROGLUTAMATE FORMATION AT GLN-1</scope>
    <scope>MASS SPECTROMETRY</scope>
    <source>
        <tissue>Venom</tissue>
    </source>
</reference>
<protein>
    <recommendedName>
        <fullName>Bradykinin-potentiating peptide 7b</fullName>
        <shortName>BPP-7b</shortName>
    </recommendedName>
</protein>